<gene>
    <name type="primary">y06C</name>
    <name type="synonym">60.1</name>
    <name type="synonym">tk.3</name>
</gene>
<reference key="1">
    <citation type="journal article" date="1986" name="Nucleic Acids Res.">
        <title>Nucleotide sequence and analysis of the 58.3 to 65.5-kb early region of bacteriophage T4.</title>
        <authorList>
            <person name="Valerie K."/>
            <person name="Stevens J."/>
            <person name="Lynch M."/>
            <person name="Henderson E.E."/>
            <person name="de Riel J.K."/>
        </authorList>
    </citation>
    <scope>NUCLEOTIDE SEQUENCE [GENOMIC DNA]</scope>
</reference>
<reference key="2">
    <citation type="journal article" date="2003" name="Microbiol. Mol. Biol. Rev.">
        <title>Bacteriophage T4 genome.</title>
        <authorList>
            <person name="Miller E.S."/>
            <person name="Kutter E."/>
            <person name="Mosig G."/>
            <person name="Arisaka F."/>
            <person name="Kunisawa T."/>
            <person name="Ruger W."/>
        </authorList>
    </citation>
    <scope>NUCLEOTIDE SEQUENCE [LARGE SCALE GENOMIC DNA]</scope>
</reference>
<sequence>MNIHYPHPYDPKNKAVIIRQWERICRTKCPINSPHDVDKDYIGTFVEYTFIDKKGRKQHVEEYCLKVTWL</sequence>
<organism>
    <name type="scientific">Enterobacteria phage T4</name>
    <name type="common">Bacteriophage T4</name>
    <dbReference type="NCBI Taxonomy" id="10665"/>
    <lineage>
        <taxon>Viruses</taxon>
        <taxon>Duplodnaviria</taxon>
        <taxon>Heunggongvirae</taxon>
        <taxon>Uroviricota</taxon>
        <taxon>Caudoviricetes</taxon>
        <taxon>Straboviridae</taxon>
        <taxon>Tevenvirinae</taxon>
        <taxon>Tequatrovirus</taxon>
    </lineage>
</organism>
<dbReference type="EMBL" id="X04567">
    <property type="protein sequence ID" value="CAA28231.1"/>
    <property type="molecule type" value="Genomic_DNA"/>
</dbReference>
<dbReference type="EMBL" id="AF158101">
    <property type="protein sequence ID" value="AAD42666.1"/>
    <property type="molecule type" value="Genomic_DNA"/>
</dbReference>
<dbReference type="RefSeq" id="NP_049722.1">
    <property type="nucleotide sequence ID" value="NC_000866.4"/>
</dbReference>
<dbReference type="GeneID" id="1258705"/>
<dbReference type="KEGG" id="vg:1258705"/>
<dbReference type="OrthoDB" id="20337at10239"/>
<dbReference type="Proteomes" id="UP000009087">
    <property type="component" value="Segment"/>
</dbReference>
<dbReference type="InterPro" id="IPR055626">
    <property type="entry name" value="DUF7202"/>
</dbReference>
<dbReference type="Pfam" id="PF23832">
    <property type="entry name" value="DUF7202"/>
    <property type="match status" value="1"/>
</dbReference>
<protein>
    <recommendedName>
        <fullName>Uncharacterized 8.5 kDa protein in tk-vs intergenic region</fullName>
    </recommendedName>
</protein>
<organismHost>
    <name type="scientific">Escherichia coli</name>
    <dbReference type="NCBI Taxonomy" id="562"/>
</organismHost>
<feature type="chain" id="PRO_0000165135" description="Uncharacterized 8.5 kDa protein in tk-vs intergenic region">
    <location>
        <begin position="1"/>
        <end position="70"/>
    </location>
</feature>
<keyword id="KW-1185">Reference proteome</keyword>
<name>Y06C_BPT4</name>
<proteinExistence type="predicted"/>
<accession>P13308</accession>